<keyword id="KW-0687">Ribonucleoprotein</keyword>
<keyword id="KW-0689">Ribosomal protein</keyword>
<dbReference type="EMBL" id="AE017244">
    <property type="protein sequence ID" value="AAZ54000.1"/>
    <property type="molecule type" value="Genomic_DNA"/>
</dbReference>
<dbReference type="RefSeq" id="WP_011290416.1">
    <property type="nucleotide sequence ID" value="NC_007332.1"/>
</dbReference>
<dbReference type="SMR" id="Q4A789"/>
<dbReference type="KEGG" id="mhp:MHP7448_0638"/>
<dbReference type="HOGENOM" id="CLU_190949_0_1_14"/>
<dbReference type="Proteomes" id="UP000000553">
    <property type="component" value="Chromosome"/>
</dbReference>
<dbReference type="GO" id="GO:0005737">
    <property type="term" value="C:cytoplasm"/>
    <property type="evidence" value="ECO:0007669"/>
    <property type="project" value="UniProtKB-ARBA"/>
</dbReference>
<dbReference type="GO" id="GO:1990904">
    <property type="term" value="C:ribonucleoprotein complex"/>
    <property type="evidence" value="ECO:0007669"/>
    <property type="project" value="UniProtKB-KW"/>
</dbReference>
<dbReference type="GO" id="GO:0005840">
    <property type="term" value="C:ribosome"/>
    <property type="evidence" value="ECO:0007669"/>
    <property type="project" value="UniProtKB-KW"/>
</dbReference>
<dbReference type="GO" id="GO:0003735">
    <property type="term" value="F:structural constituent of ribosome"/>
    <property type="evidence" value="ECO:0007669"/>
    <property type="project" value="InterPro"/>
</dbReference>
<dbReference type="GO" id="GO:0006412">
    <property type="term" value="P:translation"/>
    <property type="evidence" value="ECO:0007669"/>
    <property type="project" value="UniProtKB-UniRule"/>
</dbReference>
<dbReference type="Gene3D" id="2.20.28.120">
    <property type="entry name" value="Ribosomal protein L33"/>
    <property type="match status" value="1"/>
</dbReference>
<dbReference type="HAMAP" id="MF_00294">
    <property type="entry name" value="Ribosomal_bL33"/>
    <property type="match status" value="1"/>
</dbReference>
<dbReference type="InterPro" id="IPR001705">
    <property type="entry name" value="Ribosomal_bL33"/>
</dbReference>
<dbReference type="InterPro" id="IPR038584">
    <property type="entry name" value="Ribosomal_bL33_sf"/>
</dbReference>
<dbReference type="InterPro" id="IPR011332">
    <property type="entry name" value="Ribosomal_zn-bd"/>
</dbReference>
<dbReference type="NCBIfam" id="NF001764">
    <property type="entry name" value="PRK00504.1"/>
    <property type="match status" value="1"/>
</dbReference>
<dbReference type="NCBIfam" id="TIGR01023">
    <property type="entry name" value="rpmG_bact"/>
    <property type="match status" value="1"/>
</dbReference>
<dbReference type="Pfam" id="PF00471">
    <property type="entry name" value="Ribosomal_L33"/>
    <property type="match status" value="1"/>
</dbReference>
<dbReference type="SUPFAM" id="SSF57829">
    <property type="entry name" value="Zn-binding ribosomal proteins"/>
    <property type="match status" value="1"/>
</dbReference>
<proteinExistence type="inferred from homology"/>
<feature type="chain" id="PRO_0000356574" description="Large ribosomal subunit protein bL33A">
    <location>
        <begin position="1"/>
        <end position="46"/>
    </location>
</feature>
<comment type="similarity">
    <text evidence="1">Belongs to the bacterial ribosomal protein bL33 family.</text>
</comment>
<organism>
    <name type="scientific">Mesomycoplasma hyopneumoniae (strain 7448)</name>
    <name type="common">Mycoplasma hyopneumoniae</name>
    <dbReference type="NCBI Taxonomy" id="262722"/>
    <lineage>
        <taxon>Bacteria</taxon>
        <taxon>Bacillati</taxon>
        <taxon>Mycoplasmatota</taxon>
        <taxon>Mycoplasmoidales</taxon>
        <taxon>Metamycoplasmataceae</taxon>
        <taxon>Mesomycoplasma</taxon>
    </lineage>
</organism>
<evidence type="ECO:0000255" key="1">
    <source>
        <dbReference type="HAMAP-Rule" id="MF_00294"/>
    </source>
</evidence>
<accession>Q4A789</accession>
<gene>
    <name evidence="1" type="primary">rpmG1</name>
    <name type="ordered locus">MHP7448_0638</name>
</gene>
<reference key="1">
    <citation type="journal article" date="2005" name="J. Bacteriol.">
        <title>Swine and poultry pathogens: the complete genome sequences of two strains of Mycoplasma hyopneumoniae and a strain of Mycoplasma synoviae.</title>
        <authorList>
            <person name="Vasconcelos A.T.R."/>
            <person name="Ferreira H.B."/>
            <person name="Bizarro C.V."/>
            <person name="Bonatto S.L."/>
            <person name="Carvalho M.O."/>
            <person name="Pinto P.M."/>
            <person name="Almeida D.F."/>
            <person name="Almeida L.G.P."/>
            <person name="Almeida R."/>
            <person name="Alves-Junior L."/>
            <person name="Assuncao E.N."/>
            <person name="Azevedo V.A.C."/>
            <person name="Bogo M.R."/>
            <person name="Brigido M.M."/>
            <person name="Brocchi M."/>
            <person name="Burity H.A."/>
            <person name="Camargo A.A."/>
            <person name="Camargo S.S."/>
            <person name="Carepo M.S."/>
            <person name="Carraro D.M."/>
            <person name="de Mattos Cascardo J.C."/>
            <person name="Castro L.A."/>
            <person name="Cavalcanti G."/>
            <person name="Chemale G."/>
            <person name="Collevatti R.G."/>
            <person name="Cunha C.W."/>
            <person name="Dallagiovanna B."/>
            <person name="Dambros B.P."/>
            <person name="Dellagostin O.A."/>
            <person name="Falcao C."/>
            <person name="Fantinatti-Garboggini F."/>
            <person name="Felipe M.S.S."/>
            <person name="Fiorentin L."/>
            <person name="Franco G.R."/>
            <person name="Freitas N.S.A."/>
            <person name="Frias D."/>
            <person name="Grangeiro T.B."/>
            <person name="Grisard E.C."/>
            <person name="Guimaraes C.T."/>
            <person name="Hungria M."/>
            <person name="Jardim S.N."/>
            <person name="Krieger M.A."/>
            <person name="Laurino J.P."/>
            <person name="Lima L.F.A."/>
            <person name="Lopes M.I."/>
            <person name="Loreto E.L.S."/>
            <person name="Madeira H.M.F."/>
            <person name="Manfio G.P."/>
            <person name="Maranhao A.Q."/>
            <person name="Martinkovics C.T."/>
            <person name="Medeiros S.R.B."/>
            <person name="Moreira M.A.M."/>
            <person name="Neiva M."/>
            <person name="Ramalho-Neto C.E."/>
            <person name="Nicolas M.F."/>
            <person name="Oliveira S.C."/>
            <person name="Paixao R.F.C."/>
            <person name="Pedrosa F.O."/>
            <person name="Pena S.D.J."/>
            <person name="Pereira M."/>
            <person name="Pereira-Ferrari L."/>
            <person name="Piffer I."/>
            <person name="Pinto L.S."/>
            <person name="Potrich D.P."/>
            <person name="Salim A.C.M."/>
            <person name="Santos F.R."/>
            <person name="Schmitt R."/>
            <person name="Schneider M.P.C."/>
            <person name="Schrank A."/>
            <person name="Schrank I.S."/>
            <person name="Schuck A.F."/>
            <person name="Seuanez H.N."/>
            <person name="Silva D.W."/>
            <person name="Silva R."/>
            <person name="Silva S.C."/>
            <person name="Soares C.M.A."/>
            <person name="Souza K.R.L."/>
            <person name="Souza R.C."/>
            <person name="Staats C.C."/>
            <person name="Steffens M.B.R."/>
            <person name="Teixeira S.M.R."/>
            <person name="Urmenyi T.P."/>
            <person name="Vainstein M.H."/>
            <person name="Zuccherato L.W."/>
            <person name="Simpson A.J.G."/>
            <person name="Zaha A."/>
        </authorList>
    </citation>
    <scope>NUCLEOTIDE SEQUENCE [LARGE SCALE GENOMIC DNA]</scope>
    <source>
        <strain>7448</strain>
    </source>
</reference>
<sequence>MKKKISLSCSLCKNRNYKTNKSVQSRLQINKFCKICRKSTLHQEEK</sequence>
<protein>
    <recommendedName>
        <fullName evidence="1">Large ribosomal subunit protein bL33A</fullName>
    </recommendedName>
    <alternativeName>
        <fullName evidence="1">50S ribosomal protein L33 1</fullName>
    </alternativeName>
</protein>
<name>RL331_MESH7</name>